<gene>
    <name type="ordered locus">EcHS_A2392</name>
</gene>
<reference key="1">
    <citation type="journal article" date="2008" name="J. Bacteriol.">
        <title>The pangenome structure of Escherichia coli: comparative genomic analysis of E. coli commensal and pathogenic isolates.</title>
        <authorList>
            <person name="Rasko D.A."/>
            <person name="Rosovitz M.J."/>
            <person name="Myers G.S.A."/>
            <person name="Mongodin E.F."/>
            <person name="Fricke W.F."/>
            <person name="Gajer P."/>
            <person name="Crabtree J."/>
            <person name="Sebaihia M."/>
            <person name="Thomson N.R."/>
            <person name="Chaudhuri R."/>
            <person name="Henderson I.R."/>
            <person name="Sperandio V."/>
            <person name="Ravel J."/>
        </authorList>
    </citation>
    <scope>NUCLEOTIDE SEQUENCE [LARGE SCALE GENOMIC DNA]</scope>
    <source>
        <strain>HS</strain>
    </source>
</reference>
<comment type="similarity">
    <text evidence="1">Belongs to the CinA family.</text>
</comment>
<feature type="chain" id="PRO_1000058707" description="CinA-like protein">
    <location>
        <begin position="1"/>
        <end position="400"/>
    </location>
</feature>
<proteinExistence type="inferred from homology"/>
<organism>
    <name type="scientific">Escherichia coli O9:H4 (strain HS)</name>
    <dbReference type="NCBI Taxonomy" id="331112"/>
    <lineage>
        <taxon>Bacteria</taxon>
        <taxon>Pseudomonadati</taxon>
        <taxon>Pseudomonadota</taxon>
        <taxon>Gammaproteobacteria</taxon>
        <taxon>Enterobacterales</taxon>
        <taxon>Enterobacteriaceae</taxon>
        <taxon>Escherichia</taxon>
    </lineage>
</organism>
<evidence type="ECO:0000255" key="1">
    <source>
        <dbReference type="HAMAP-Rule" id="MF_00226"/>
    </source>
</evidence>
<accession>A8A2B6</accession>
<sequence length="400" mass="44225">MLKVEMLSTGDEVLHGQIVDTNAAWLADFFFHQGLPLSRRNTVGDNLDDLVTILRERSQHADVLIVNGGLGPTSDDLSALAAATAKGKGLVLHEAWLKEMERYFHERGRVMAPSNRKQAELPASAEFINNPVGTACGFAVQLNRCLMFFTPGVPSEFKVMVEHEILPRLRERFSLPQPPVCLRLTTFGRSESDLAQSLDTLQLPPGVTMGYRSSMPIIELKLTGPASEQQAMEKLWLDVKRVAGQSVIFEGTEGLPAQISRELQNRQFSLTLSEQFTGGLLALQLSRAGAPLLACEVVPSQEETLAQTAHWITERRANHFAGLALAVSGFENEHLNFALATPDGTFALRVRFSTTRYSLAIRQEVCAMMALNMLRRWLNGQDIASEHGWIEVVESMTLSV</sequence>
<protein>
    <recommendedName>
        <fullName evidence="1">CinA-like protein</fullName>
    </recommendedName>
</protein>
<name>CINAL_ECOHS</name>
<dbReference type="EMBL" id="CP000802">
    <property type="protein sequence ID" value="ABV06670.1"/>
    <property type="molecule type" value="Genomic_DNA"/>
</dbReference>
<dbReference type="RefSeq" id="WP_000921648.1">
    <property type="nucleotide sequence ID" value="NC_009800.1"/>
</dbReference>
<dbReference type="SMR" id="A8A2B6"/>
<dbReference type="KEGG" id="ecx:EcHS_A2392"/>
<dbReference type="HOGENOM" id="CLU_030805_9_1_6"/>
<dbReference type="CDD" id="cd00885">
    <property type="entry name" value="cinA"/>
    <property type="match status" value="1"/>
</dbReference>
<dbReference type="Gene3D" id="3.40.980.10">
    <property type="entry name" value="MoaB/Mog-like domain"/>
    <property type="match status" value="1"/>
</dbReference>
<dbReference type="HAMAP" id="MF_00226_B">
    <property type="entry name" value="CinA_B"/>
    <property type="match status" value="1"/>
</dbReference>
<dbReference type="InterPro" id="IPR050101">
    <property type="entry name" value="CinA"/>
</dbReference>
<dbReference type="InterPro" id="IPR036653">
    <property type="entry name" value="CinA-like_C"/>
</dbReference>
<dbReference type="InterPro" id="IPR008135">
    <property type="entry name" value="Competence-induced_CinA"/>
</dbReference>
<dbReference type="InterPro" id="IPR036425">
    <property type="entry name" value="MoaB/Mog-like_dom_sf"/>
</dbReference>
<dbReference type="InterPro" id="IPR001453">
    <property type="entry name" value="MoaB/Mog_dom"/>
</dbReference>
<dbReference type="NCBIfam" id="TIGR00200">
    <property type="entry name" value="cinA_nterm"/>
    <property type="match status" value="1"/>
</dbReference>
<dbReference type="NCBIfam" id="TIGR00177">
    <property type="entry name" value="molyb_syn"/>
    <property type="match status" value="1"/>
</dbReference>
<dbReference type="NCBIfam" id="NF002978">
    <property type="entry name" value="PRK03673.1"/>
    <property type="match status" value="1"/>
</dbReference>
<dbReference type="PANTHER" id="PTHR13939">
    <property type="entry name" value="NICOTINAMIDE-NUCLEOTIDE AMIDOHYDROLASE PNCC"/>
    <property type="match status" value="1"/>
</dbReference>
<dbReference type="PANTHER" id="PTHR13939:SF0">
    <property type="entry name" value="NMN AMIDOHYDROLASE-LIKE PROTEIN YFAY"/>
    <property type="match status" value="1"/>
</dbReference>
<dbReference type="Pfam" id="PF00994">
    <property type="entry name" value="MoCF_biosynth"/>
    <property type="match status" value="1"/>
</dbReference>
<dbReference type="PIRSF" id="PIRSF006728">
    <property type="entry name" value="CinA"/>
    <property type="match status" value="1"/>
</dbReference>
<dbReference type="SMART" id="SM00852">
    <property type="entry name" value="MoCF_biosynth"/>
    <property type="match status" value="1"/>
</dbReference>
<dbReference type="SUPFAM" id="SSF142433">
    <property type="entry name" value="CinA-like"/>
    <property type="match status" value="1"/>
</dbReference>
<dbReference type="SUPFAM" id="SSF53218">
    <property type="entry name" value="Molybdenum cofactor biosynthesis proteins"/>
    <property type="match status" value="1"/>
</dbReference>